<gene>
    <name evidence="6" type="primary">ido</name>
</gene>
<name>IDO_BACTU</name>
<accession>E2GIN1</accession>
<feature type="chain" id="PRO_0000430784" description="L-isoleucine-4-hydroxylase">
    <location>
        <begin position="1"/>
        <end position="240"/>
    </location>
</feature>
<feature type="binding site" evidence="1">
    <location>
        <position position="159"/>
    </location>
    <ligand>
        <name>Fe cation</name>
        <dbReference type="ChEBI" id="CHEBI:24875"/>
        <note>catalytic</note>
    </ligand>
</feature>
<feature type="binding site" evidence="1">
    <location>
        <position position="161"/>
    </location>
    <ligand>
        <name>Fe cation</name>
        <dbReference type="ChEBI" id="CHEBI:24875"/>
        <note>catalytic</note>
    </ligand>
</feature>
<feature type="binding site" evidence="1">
    <location>
        <position position="212"/>
    </location>
    <ligand>
        <name>Fe cation</name>
        <dbReference type="ChEBI" id="CHEBI:24875"/>
        <note>catalytic</note>
    </ligand>
</feature>
<feature type="helix" evidence="10">
    <location>
        <begin position="8"/>
        <end position="18"/>
    </location>
</feature>
<feature type="strand" evidence="10">
    <location>
        <begin position="19"/>
        <end position="23"/>
    </location>
</feature>
<feature type="helix" evidence="10">
    <location>
        <begin position="25"/>
        <end position="28"/>
    </location>
</feature>
<feature type="helix" evidence="10">
    <location>
        <begin position="34"/>
        <end position="43"/>
    </location>
</feature>
<feature type="helix" evidence="10">
    <location>
        <begin position="44"/>
        <end position="47"/>
    </location>
</feature>
<feature type="strand" evidence="10">
    <location>
        <begin position="56"/>
        <end position="66"/>
    </location>
</feature>
<feature type="strand" evidence="10">
    <location>
        <begin position="68"/>
        <end position="71"/>
    </location>
</feature>
<feature type="helix" evidence="10">
    <location>
        <begin position="103"/>
        <end position="106"/>
    </location>
</feature>
<feature type="helix" evidence="10">
    <location>
        <begin position="109"/>
        <end position="123"/>
    </location>
</feature>
<feature type="strand" evidence="10">
    <location>
        <begin position="125"/>
        <end position="128"/>
    </location>
</feature>
<feature type="strand" evidence="10">
    <location>
        <begin position="134"/>
        <end position="145"/>
    </location>
</feature>
<feature type="strand" evidence="10">
    <location>
        <begin position="157"/>
        <end position="159"/>
    </location>
</feature>
<feature type="strand" evidence="10">
    <location>
        <begin position="162"/>
        <end position="174"/>
    </location>
</feature>
<feature type="strand" evidence="10">
    <location>
        <begin position="182"/>
        <end position="187"/>
    </location>
</feature>
<feature type="strand" evidence="10">
    <location>
        <begin position="193"/>
        <end position="195"/>
    </location>
</feature>
<feature type="strand" evidence="10">
    <location>
        <begin position="203"/>
        <end position="206"/>
    </location>
</feature>
<feature type="strand" evidence="10">
    <location>
        <begin position="210"/>
        <end position="214"/>
    </location>
</feature>
<feature type="strand" evidence="10">
    <location>
        <begin position="220"/>
        <end position="223"/>
    </location>
</feature>
<feature type="strand" evidence="10">
    <location>
        <begin position="225"/>
        <end position="236"/>
    </location>
</feature>
<sequence length="240" mass="27838">MKMSGFSIEEKVHEFESKGFLEISNEIFLQEEENHSLLTQAQLDYYNLEDDAYGECRARSYSRYIKYVDSPDYILDNSNDYFQSKEYNYDDGGKVRQFNSINDSFLCNPLIQNIVRFDTEFAFKTNIIDKSKDLIIGLHQVRYKATKERPSFSSPIWLHKDDEPVVFLHLMNLSNTAIGGDNLIANSPREINQFISLKEPLETLVFGQKVFHAVTPLGTECSTEAFRDILLVTFSYKETK</sequence>
<protein>
    <recommendedName>
        <fullName evidence="6">L-isoleucine-4-hydroxylase</fullName>
        <ecNumber evidence="2 3 4">1.14.11.45</ecNumber>
    </recommendedName>
    <alternativeName>
        <fullName evidence="5">L-isoleucine dioxygenase</fullName>
        <shortName evidence="5">IDO</shortName>
    </alternativeName>
</protein>
<evidence type="ECO:0000250" key="1">
    <source>
        <dbReference type="UniProtKB" id="Q96323"/>
    </source>
</evidence>
<evidence type="ECO:0000269" key="2">
    <source>
    </source>
</evidence>
<evidence type="ECO:0000269" key="3">
    <source>
    </source>
</evidence>
<evidence type="ECO:0000269" key="4">
    <source>
    </source>
</evidence>
<evidence type="ECO:0000303" key="5">
    <source>
    </source>
</evidence>
<evidence type="ECO:0000303" key="6">
    <source>
    </source>
</evidence>
<evidence type="ECO:0000305" key="7"/>
<evidence type="ECO:0000305" key="8">
    <source>
    </source>
</evidence>
<evidence type="ECO:0000312" key="9">
    <source>
        <dbReference type="EMBL" id="ADJ94127.1"/>
    </source>
</evidence>
<evidence type="ECO:0007829" key="10">
    <source>
        <dbReference type="PDB" id="6LNH"/>
    </source>
</evidence>
<organism evidence="9">
    <name type="scientific">Bacillus thuringiensis</name>
    <dbReference type="NCBI Taxonomy" id="1428"/>
    <lineage>
        <taxon>Bacteria</taxon>
        <taxon>Bacillati</taxon>
        <taxon>Bacillota</taxon>
        <taxon>Bacilli</taxon>
        <taxon>Bacillales</taxon>
        <taxon>Bacillaceae</taxon>
        <taxon>Bacillus</taxon>
        <taxon>Bacillus cereus group</taxon>
    </lineage>
</organism>
<reference key="1">
    <citation type="journal article" date="2010" name="Appl. Microbiol. Biotechnol.">
        <title>Metabolic engineering of Escherichia coli to produce (2S, 3R, 4S)-4-hydroxyisoleucine.</title>
        <authorList>
            <person name="Smirnov S.V."/>
            <person name="Kodera T."/>
            <person name="Samsonova N.N."/>
            <person name="Kotlyarova V.A."/>
            <person name="Rushkevich N.Y."/>
            <person name="Kivero A.D."/>
            <person name="Sokolov P.M."/>
            <person name="Hibi M."/>
            <person name="Ogawa J."/>
            <person name="Shimizu S."/>
        </authorList>
    </citation>
    <scope>NUCLEOTIDE SEQUENCE [GENOMIC DNA]</scope>
    <scope>FUNCTION</scope>
    <scope>CATALYTIC ACTIVITY</scope>
    <scope>BIOTECHNOLOGY</scope>
    <source>
        <strain evidence="3">2e2</strain>
    </source>
</reference>
<reference key="2">
    <citation type="journal article" date="2009" name="Biochem. Biophys. Res. Commun.">
        <title>A novel l-isoleucine hydroxylating enzyme, l-isoleucine dioxygenase from Bacillus thuringiensis, produces (2S,3R,4S)-4-hydroxyisoleucine.</title>
        <authorList>
            <person name="Kodera T."/>
            <person name="Smirnov S.V."/>
            <person name="Samsonova N.N."/>
            <person name="Kozlov Y.I."/>
            <person name="Koyama R."/>
            <person name="Hibi M."/>
            <person name="Ogawa J."/>
            <person name="Yokozeki K."/>
            <person name="Shimizu S."/>
        </authorList>
    </citation>
    <scope>FUNCTION</scope>
    <scope>CATALYTIC ACTIVITY</scope>
    <scope>COFACTOR</scope>
    <scope>BIOTECHNOLOGY</scope>
    <source>
        <strain>2e2</strain>
    </source>
</reference>
<reference key="3">
    <citation type="journal article" date="2011" name="Appl. Environ. Microbiol.">
        <title>Characterization of Bacillus thuringiensis L-isoleucine dioxygenase for production of useful amino acids.</title>
        <authorList>
            <person name="Hibi M."/>
            <person name="Kawashima T."/>
            <person name="Kodera T."/>
            <person name="Smirnov S.V."/>
            <person name="Sokolov P.M."/>
            <person name="Sugiyama M."/>
            <person name="Shimizu S."/>
            <person name="Yokozeki K."/>
            <person name="Ogawa J."/>
        </authorList>
    </citation>
    <scope>FUNCTION</scope>
    <scope>CATALYTIC ACTIVITY</scope>
    <source>
        <strain>2e2</strain>
    </source>
</reference>
<keyword id="KW-0002">3D-structure</keyword>
<keyword id="KW-0223">Dioxygenase</keyword>
<keyword id="KW-0408">Iron</keyword>
<keyword id="KW-0479">Metal-binding</keyword>
<keyword id="KW-0560">Oxidoreductase</keyword>
<keyword id="KW-0847">Vitamin C</keyword>
<comment type="function">
    <text evidence="2 3 4">Catalyzes the hydroxylation of L-isoleucine to produce (4S)-4-hydroxy-L-isoleucine (PubMed:19850012, PubMed:20665018, PubMed:21821743). Can also catalyze the hydroxylation of L-leucine, L-norvaline, L-norleucine and L-allo-isoleucine, as well as the sulfoxidation of L-methionine, L-ethionine, S-methyl-L-cysteine, S-ethyl-L-cysteine, and S-allyl-L-cysteine (PubMed:21821743).</text>
</comment>
<comment type="catalytic activity">
    <reaction evidence="2 3 4">
        <text>L-isoleucine + 2-oxoglutarate + O2 = (4S)-4-hydroxy-L-isoleucine + succinate + CO2</text>
        <dbReference type="Rhea" id="RHEA:41448"/>
        <dbReference type="ChEBI" id="CHEBI:15379"/>
        <dbReference type="ChEBI" id="CHEBI:16526"/>
        <dbReference type="ChEBI" id="CHEBI:16810"/>
        <dbReference type="ChEBI" id="CHEBI:30031"/>
        <dbReference type="ChEBI" id="CHEBI:58045"/>
        <dbReference type="ChEBI" id="CHEBI:78247"/>
        <dbReference type="EC" id="1.14.11.45"/>
    </reaction>
</comment>
<comment type="cofactor">
    <cofactor evidence="8">
        <name>L-ascorbate</name>
        <dbReference type="ChEBI" id="CHEBI:38290"/>
    </cofactor>
    <text evidence="8">Binds 1 ascorbate molecule per subunit.</text>
</comment>
<comment type="cofactor">
    <cofactor evidence="8">
        <name>Fe(2+)</name>
        <dbReference type="ChEBI" id="CHEBI:29033"/>
    </cofactor>
    <text evidence="8">Binds 1 Fe(2+) ion per subunit.</text>
</comment>
<comment type="biotechnology">
    <text evidence="5 6">4-Hydroxyisoleucine is a natural nonproteinogenic amino acid that exhibits insulinotropic biological activity and increases glucose-induced release of insulin.</text>
</comment>
<comment type="similarity">
    <text evidence="7">Belongs to the iron/ascorbate-dependent oxidoreductase family.</text>
</comment>
<proteinExistence type="evidence at protein level"/>
<dbReference type="EC" id="1.14.11.45" evidence="2 3 4"/>
<dbReference type="EMBL" id="HM358019">
    <property type="protein sequence ID" value="ADJ94127.1"/>
    <property type="molecule type" value="Genomic_DNA"/>
</dbReference>
<dbReference type="PDB" id="6LNH">
    <property type="method" value="X-ray"/>
    <property type="resolution" value="2.34 A"/>
    <property type="chains" value="A/B/C/D=1-240"/>
</dbReference>
<dbReference type="PDBsum" id="6LNH"/>
<dbReference type="SMR" id="E2GIN1"/>
<dbReference type="KEGG" id="ag:ADJ94127"/>
<dbReference type="BioCyc" id="MetaCyc:MONOMER-17595"/>
<dbReference type="BRENDA" id="1.14.11.45">
    <property type="organism ID" value="711"/>
</dbReference>
<dbReference type="GO" id="GO:0051213">
    <property type="term" value="F:dioxygenase activity"/>
    <property type="evidence" value="ECO:0000314"/>
    <property type="project" value="CACAO"/>
</dbReference>
<dbReference type="GO" id="GO:0008198">
    <property type="term" value="F:ferrous iron binding"/>
    <property type="evidence" value="ECO:0000314"/>
    <property type="project" value="UniProtKB"/>
</dbReference>
<dbReference type="GO" id="GO:0031418">
    <property type="term" value="F:L-ascorbic acid binding"/>
    <property type="evidence" value="ECO:0007669"/>
    <property type="project" value="UniProtKB-KW"/>
</dbReference>
<dbReference type="FunFam" id="2.60.120.620:FF:000049">
    <property type="entry name" value="L-isoleucine-4-hydroxylase"/>
    <property type="match status" value="1"/>
</dbReference>
<dbReference type="Gene3D" id="2.60.120.620">
    <property type="entry name" value="q2cbj1_9rhob like domain"/>
    <property type="match status" value="1"/>
</dbReference>
<dbReference type="InterPro" id="IPR018724">
    <property type="entry name" value="2OG-Fe_dioxygenase"/>
</dbReference>
<dbReference type="Pfam" id="PF10014">
    <property type="entry name" value="2OG-Fe_Oxy_2"/>
    <property type="match status" value="1"/>
</dbReference>